<keyword id="KW-0521">NADP</keyword>
<keyword id="KW-0560">Oxidoreductase</keyword>
<keyword id="KW-0627">Porphyrin biosynthesis</keyword>
<feature type="chain" id="PRO_1000093109" description="Glutamyl-tRNA reductase">
    <location>
        <begin position="1"/>
        <end position="427"/>
    </location>
</feature>
<feature type="active site" description="Nucleophile" evidence="1">
    <location>
        <position position="50"/>
    </location>
</feature>
<feature type="binding site" evidence="1">
    <location>
        <begin position="49"/>
        <end position="52"/>
    </location>
    <ligand>
        <name>substrate</name>
    </ligand>
</feature>
<feature type="binding site" evidence="1">
    <location>
        <position position="105"/>
    </location>
    <ligand>
        <name>substrate</name>
    </ligand>
</feature>
<feature type="binding site" evidence="1">
    <location>
        <begin position="110"/>
        <end position="112"/>
    </location>
    <ligand>
        <name>substrate</name>
    </ligand>
</feature>
<feature type="binding site" evidence="1">
    <location>
        <position position="116"/>
    </location>
    <ligand>
        <name>substrate</name>
    </ligand>
</feature>
<feature type="binding site" evidence="1">
    <location>
        <begin position="185"/>
        <end position="190"/>
    </location>
    <ligand>
        <name>NADP(+)</name>
        <dbReference type="ChEBI" id="CHEBI:58349"/>
    </ligand>
</feature>
<feature type="site" description="Important for activity" evidence="1">
    <location>
        <position position="95"/>
    </location>
</feature>
<dbReference type="EC" id="1.2.1.70" evidence="1"/>
<dbReference type="EMBL" id="CU459141">
    <property type="protein sequence ID" value="CAM87797.1"/>
    <property type="molecule type" value="Genomic_DNA"/>
</dbReference>
<dbReference type="RefSeq" id="WP_000007423.1">
    <property type="nucleotide sequence ID" value="NZ_JBDGFB010000027.1"/>
</dbReference>
<dbReference type="SMR" id="B0V8H2"/>
<dbReference type="EnsemblBacteria" id="CAM87797">
    <property type="protein sequence ID" value="CAM87797"/>
    <property type="gene ID" value="ABAYE2976"/>
</dbReference>
<dbReference type="KEGG" id="aby:ABAYE2976"/>
<dbReference type="HOGENOM" id="CLU_035113_2_2_6"/>
<dbReference type="UniPathway" id="UPA00251">
    <property type="reaction ID" value="UER00316"/>
</dbReference>
<dbReference type="GO" id="GO:0008883">
    <property type="term" value="F:glutamyl-tRNA reductase activity"/>
    <property type="evidence" value="ECO:0007669"/>
    <property type="project" value="UniProtKB-UniRule"/>
</dbReference>
<dbReference type="GO" id="GO:0050661">
    <property type="term" value="F:NADP binding"/>
    <property type="evidence" value="ECO:0007669"/>
    <property type="project" value="InterPro"/>
</dbReference>
<dbReference type="GO" id="GO:0019353">
    <property type="term" value="P:protoporphyrinogen IX biosynthetic process from glutamate"/>
    <property type="evidence" value="ECO:0007669"/>
    <property type="project" value="TreeGrafter"/>
</dbReference>
<dbReference type="CDD" id="cd05213">
    <property type="entry name" value="NAD_bind_Glutamyl_tRNA_reduct"/>
    <property type="match status" value="1"/>
</dbReference>
<dbReference type="FunFam" id="3.30.460.30:FF:000001">
    <property type="entry name" value="Glutamyl-tRNA reductase"/>
    <property type="match status" value="1"/>
</dbReference>
<dbReference type="FunFam" id="3.40.50.720:FF:000031">
    <property type="entry name" value="Glutamyl-tRNA reductase"/>
    <property type="match status" value="1"/>
</dbReference>
<dbReference type="Gene3D" id="3.30.460.30">
    <property type="entry name" value="Glutamyl-tRNA reductase, N-terminal domain"/>
    <property type="match status" value="1"/>
</dbReference>
<dbReference type="Gene3D" id="3.40.50.720">
    <property type="entry name" value="NAD(P)-binding Rossmann-like Domain"/>
    <property type="match status" value="1"/>
</dbReference>
<dbReference type="HAMAP" id="MF_00087">
    <property type="entry name" value="Glu_tRNA_reductase"/>
    <property type="match status" value="1"/>
</dbReference>
<dbReference type="InterPro" id="IPR000343">
    <property type="entry name" value="4pyrrol_synth_GluRdtase"/>
</dbReference>
<dbReference type="InterPro" id="IPR015896">
    <property type="entry name" value="4pyrrol_synth_GluRdtase_dimer"/>
</dbReference>
<dbReference type="InterPro" id="IPR015895">
    <property type="entry name" value="4pyrrol_synth_GluRdtase_N"/>
</dbReference>
<dbReference type="InterPro" id="IPR018214">
    <property type="entry name" value="GluRdtase_CS"/>
</dbReference>
<dbReference type="InterPro" id="IPR036453">
    <property type="entry name" value="GluRdtase_dimer_dom_sf"/>
</dbReference>
<dbReference type="InterPro" id="IPR036343">
    <property type="entry name" value="GluRdtase_N_sf"/>
</dbReference>
<dbReference type="InterPro" id="IPR036291">
    <property type="entry name" value="NAD(P)-bd_dom_sf"/>
</dbReference>
<dbReference type="InterPro" id="IPR006151">
    <property type="entry name" value="Shikm_DH/Glu-tRNA_Rdtase"/>
</dbReference>
<dbReference type="NCBIfam" id="TIGR01035">
    <property type="entry name" value="hemA"/>
    <property type="match status" value="1"/>
</dbReference>
<dbReference type="PANTHER" id="PTHR43013">
    <property type="entry name" value="GLUTAMYL-TRNA REDUCTASE"/>
    <property type="match status" value="1"/>
</dbReference>
<dbReference type="PANTHER" id="PTHR43013:SF1">
    <property type="entry name" value="GLUTAMYL-TRNA REDUCTASE"/>
    <property type="match status" value="1"/>
</dbReference>
<dbReference type="Pfam" id="PF00745">
    <property type="entry name" value="GlutR_dimer"/>
    <property type="match status" value="1"/>
</dbReference>
<dbReference type="Pfam" id="PF05201">
    <property type="entry name" value="GlutR_N"/>
    <property type="match status" value="1"/>
</dbReference>
<dbReference type="Pfam" id="PF01488">
    <property type="entry name" value="Shikimate_DH"/>
    <property type="match status" value="1"/>
</dbReference>
<dbReference type="PIRSF" id="PIRSF000445">
    <property type="entry name" value="4pyrrol_synth_GluRdtase"/>
    <property type="match status" value="1"/>
</dbReference>
<dbReference type="SUPFAM" id="SSF69742">
    <property type="entry name" value="Glutamyl tRNA-reductase catalytic, N-terminal domain"/>
    <property type="match status" value="1"/>
</dbReference>
<dbReference type="SUPFAM" id="SSF69075">
    <property type="entry name" value="Glutamyl tRNA-reductase dimerization domain"/>
    <property type="match status" value="1"/>
</dbReference>
<dbReference type="SUPFAM" id="SSF51735">
    <property type="entry name" value="NAD(P)-binding Rossmann-fold domains"/>
    <property type="match status" value="1"/>
</dbReference>
<dbReference type="PROSITE" id="PS00747">
    <property type="entry name" value="GLUTR"/>
    <property type="match status" value="1"/>
</dbReference>
<reference key="1">
    <citation type="journal article" date="2008" name="PLoS ONE">
        <title>Comparative analysis of Acinetobacters: three genomes for three lifestyles.</title>
        <authorList>
            <person name="Vallenet D."/>
            <person name="Nordmann P."/>
            <person name="Barbe V."/>
            <person name="Poirel L."/>
            <person name="Mangenot S."/>
            <person name="Bataille E."/>
            <person name="Dossat C."/>
            <person name="Gas S."/>
            <person name="Kreimeyer A."/>
            <person name="Lenoble P."/>
            <person name="Oztas S."/>
            <person name="Poulain J."/>
            <person name="Segurens B."/>
            <person name="Robert C."/>
            <person name="Abergel C."/>
            <person name="Claverie J.-M."/>
            <person name="Raoult D."/>
            <person name="Medigue C."/>
            <person name="Weissenbach J."/>
            <person name="Cruveiller S."/>
        </authorList>
    </citation>
    <scope>NUCLEOTIDE SEQUENCE [LARGE SCALE GENOMIC DNA]</scope>
    <source>
        <strain>AYE</strain>
    </source>
</reference>
<accession>B0V8H2</accession>
<protein>
    <recommendedName>
        <fullName evidence="1">Glutamyl-tRNA reductase</fullName>
        <shortName evidence="1">GluTR</shortName>
        <ecNumber evidence="1">1.2.1.70</ecNumber>
    </recommendedName>
</protein>
<gene>
    <name evidence="1" type="primary">hemA</name>
    <name type="ordered locus">ABAYE2976</name>
</gene>
<name>HEM1_ACIBY</name>
<comment type="function">
    <text evidence="1">Catalyzes the NADPH-dependent reduction of glutamyl-tRNA(Glu) to glutamate 1-semialdehyde (GSA).</text>
</comment>
<comment type="catalytic activity">
    <reaction evidence="1">
        <text>(S)-4-amino-5-oxopentanoate + tRNA(Glu) + NADP(+) = L-glutamyl-tRNA(Glu) + NADPH + H(+)</text>
        <dbReference type="Rhea" id="RHEA:12344"/>
        <dbReference type="Rhea" id="RHEA-COMP:9663"/>
        <dbReference type="Rhea" id="RHEA-COMP:9680"/>
        <dbReference type="ChEBI" id="CHEBI:15378"/>
        <dbReference type="ChEBI" id="CHEBI:57501"/>
        <dbReference type="ChEBI" id="CHEBI:57783"/>
        <dbReference type="ChEBI" id="CHEBI:58349"/>
        <dbReference type="ChEBI" id="CHEBI:78442"/>
        <dbReference type="ChEBI" id="CHEBI:78520"/>
        <dbReference type="EC" id="1.2.1.70"/>
    </reaction>
</comment>
<comment type="pathway">
    <text evidence="1">Porphyrin-containing compound metabolism; protoporphyrin-IX biosynthesis; 5-aminolevulinate from L-glutamyl-tRNA(Glu): step 1/2.</text>
</comment>
<comment type="subunit">
    <text evidence="1">Homodimer.</text>
</comment>
<comment type="domain">
    <text evidence="1">Possesses an unusual extended V-shaped dimeric structure with each monomer consisting of three distinct domains arranged along a curved 'spinal' alpha-helix. The N-terminal catalytic domain specifically recognizes the glutamate moiety of the substrate. The second domain is the NADPH-binding domain, and the third C-terminal domain is responsible for dimerization.</text>
</comment>
<comment type="miscellaneous">
    <text evidence="1">During catalysis, the active site Cys acts as a nucleophile attacking the alpha-carbonyl group of tRNA-bound glutamate with the formation of a thioester intermediate between enzyme and glutamate, and the concomitant release of tRNA(Glu). The thioester intermediate is finally reduced by direct hydride transfer from NADPH, to form the product GSA.</text>
</comment>
<comment type="similarity">
    <text evidence="1">Belongs to the glutamyl-tRNA reductase family.</text>
</comment>
<proteinExistence type="inferred from homology"/>
<organism>
    <name type="scientific">Acinetobacter baumannii (strain AYE)</name>
    <dbReference type="NCBI Taxonomy" id="509173"/>
    <lineage>
        <taxon>Bacteria</taxon>
        <taxon>Pseudomonadati</taxon>
        <taxon>Pseudomonadota</taxon>
        <taxon>Gammaproteobacteria</taxon>
        <taxon>Moraxellales</taxon>
        <taxon>Moraxellaceae</taxon>
        <taxon>Acinetobacter</taxon>
        <taxon>Acinetobacter calcoaceticus/baumannii complex</taxon>
    </lineage>
</organism>
<evidence type="ECO:0000255" key="1">
    <source>
        <dbReference type="HAMAP-Rule" id="MF_00087"/>
    </source>
</evidence>
<sequence length="427" mass="47964">MSFFALGVNHQTASVELREQIAFNAERLSNLLAEQRHHESLKDLVVVSTCNRTEVYAMAEDAESLLKWLADANNIDVKQLIHHVYRYENAQAITHLMRVASGLDSLMLGEPQILGQVKSALALSKEAQTVSPELNSVFEYAFYAAKRVRSETAVGSHAVSMGYAVAQLALQVFSKPEKLTVMVVAAGEMNSLVAKHLAEMGVAKMIICNRSRERADQLAQEIAHQVEVEIIDFSDLAENLYRADVVSSCTGSLHQVIAYADVKTALKKRRYQQMLMVDLAVPRDIDPKVESLDGVYLYGVDDLQSVIDENLAQRRQAAVEAEVMVNQLATQLITHQKVKEAGSTIHAYRQHSEEISQRELTHALEALHHGGNPEQVLQQFAHRLTQKLIHPTSMLLREAAKAESPDYFEWLQQHLQDVFDHERKPKR</sequence>